<proteinExistence type="inferred from homology"/>
<evidence type="ECO:0000255" key="1">
    <source>
        <dbReference type="HAMAP-Rule" id="MF_00152"/>
    </source>
</evidence>
<gene>
    <name evidence="1" type="primary">nfo</name>
    <name type="ordered locus">Plut_0428</name>
</gene>
<reference key="1">
    <citation type="submission" date="2005-08" db="EMBL/GenBank/DDBJ databases">
        <title>Complete sequence of Pelodictyon luteolum DSM 273.</title>
        <authorList>
            <consortium name="US DOE Joint Genome Institute"/>
            <person name="Copeland A."/>
            <person name="Lucas S."/>
            <person name="Lapidus A."/>
            <person name="Barry K."/>
            <person name="Detter J.C."/>
            <person name="Glavina T."/>
            <person name="Hammon N."/>
            <person name="Israni S."/>
            <person name="Pitluck S."/>
            <person name="Bryant D."/>
            <person name="Schmutz J."/>
            <person name="Larimer F."/>
            <person name="Land M."/>
            <person name="Kyrpides N."/>
            <person name="Ivanova N."/>
            <person name="Richardson P."/>
        </authorList>
    </citation>
    <scope>NUCLEOTIDE SEQUENCE [LARGE SCALE GENOMIC DNA]</scope>
    <source>
        <strain>DSM 273 / BCRC 81028 / 2530</strain>
    </source>
</reference>
<comment type="function">
    <text evidence="1">Endonuclease IV plays a role in DNA repair. It cleaves phosphodiester bonds at apurinic or apyrimidinic (AP) sites, generating a 3'-hydroxyl group and a 5'-terminal sugar phosphate.</text>
</comment>
<comment type="catalytic activity">
    <reaction evidence="1">
        <text>Endonucleolytic cleavage to 5'-phosphooligonucleotide end-products.</text>
        <dbReference type="EC" id="3.1.21.2"/>
    </reaction>
</comment>
<comment type="cofactor">
    <cofactor evidence="1">
        <name>Zn(2+)</name>
        <dbReference type="ChEBI" id="CHEBI:29105"/>
    </cofactor>
    <text evidence="1">Binds 3 Zn(2+) ions.</text>
</comment>
<comment type="similarity">
    <text evidence="1">Belongs to the AP endonuclease 2 family.</text>
</comment>
<sequence length="279" mass="30652">MKRLGAHVSIAGGIENAPLNARAIGATAFALFTKNQRQWKSPPLLPASIEAFRQNCADGGFEMRHILPHDSYLINLGNPDPLKLERSRAAFIDEMQRAESLGLELLNFHPGSHLNLSTPDECLRRIADSINMALEHSSCVTAVIENTAGQGTNLGNRFEQLAALIEMTDDKSRVGVCLDTCHLFAAGYDLATADAAGETFREFDRVVGMRYLRGMHLNDALHPVGSRLDRHACVGKGKIGLDAFRLVMQSPAFEEIPLILETPDSDGWAEEIRMLYGLQ</sequence>
<protein>
    <recommendedName>
        <fullName evidence="1">Probable endonuclease 4</fullName>
        <ecNumber evidence="1">3.1.21.2</ecNumber>
    </recommendedName>
    <alternativeName>
        <fullName evidence="1">Endodeoxyribonuclease IV</fullName>
    </alternativeName>
    <alternativeName>
        <fullName evidence="1">Endonuclease IV</fullName>
    </alternativeName>
</protein>
<name>END4_CHLL3</name>
<keyword id="KW-0227">DNA damage</keyword>
<keyword id="KW-0234">DNA repair</keyword>
<keyword id="KW-0255">Endonuclease</keyword>
<keyword id="KW-0378">Hydrolase</keyword>
<keyword id="KW-0479">Metal-binding</keyword>
<keyword id="KW-0540">Nuclease</keyword>
<keyword id="KW-1185">Reference proteome</keyword>
<keyword id="KW-0862">Zinc</keyword>
<accession>Q3B5R5</accession>
<dbReference type="EC" id="3.1.21.2" evidence="1"/>
<dbReference type="EMBL" id="CP000096">
    <property type="protein sequence ID" value="ABB23316.1"/>
    <property type="molecule type" value="Genomic_DNA"/>
</dbReference>
<dbReference type="RefSeq" id="WP_011357191.1">
    <property type="nucleotide sequence ID" value="NC_007512.1"/>
</dbReference>
<dbReference type="SMR" id="Q3B5R5"/>
<dbReference type="STRING" id="319225.Plut_0428"/>
<dbReference type="KEGG" id="plt:Plut_0428"/>
<dbReference type="eggNOG" id="COG0648">
    <property type="taxonomic scope" value="Bacteria"/>
</dbReference>
<dbReference type="HOGENOM" id="CLU_025885_0_4_10"/>
<dbReference type="OrthoDB" id="9805666at2"/>
<dbReference type="Proteomes" id="UP000002709">
    <property type="component" value="Chromosome"/>
</dbReference>
<dbReference type="GO" id="GO:0008833">
    <property type="term" value="F:deoxyribonuclease IV (phage-T4-induced) activity"/>
    <property type="evidence" value="ECO:0007669"/>
    <property type="project" value="UniProtKB-UniRule"/>
</dbReference>
<dbReference type="GO" id="GO:0003677">
    <property type="term" value="F:DNA binding"/>
    <property type="evidence" value="ECO:0007669"/>
    <property type="project" value="InterPro"/>
</dbReference>
<dbReference type="GO" id="GO:0003906">
    <property type="term" value="F:DNA-(apurinic or apyrimidinic site) endonuclease activity"/>
    <property type="evidence" value="ECO:0007669"/>
    <property type="project" value="TreeGrafter"/>
</dbReference>
<dbReference type="GO" id="GO:0008081">
    <property type="term" value="F:phosphoric diester hydrolase activity"/>
    <property type="evidence" value="ECO:0007669"/>
    <property type="project" value="TreeGrafter"/>
</dbReference>
<dbReference type="GO" id="GO:0008270">
    <property type="term" value="F:zinc ion binding"/>
    <property type="evidence" value="ECO:0007669"/>
    <property type="project" value="UniProtKB-UniRule"/>
</dbReference>
<dbReference type="GO" id="GO:0006284">
    <property type="term" value="P:base-excision repair"/>
    <property type="evidence" value="ECO:0007669"/>
    <property type="project" value="TreeGrafter"/>
</dbReference>
<dbReference type="CDD" id="cd00019">
    <property type="entry name" value="AP2Ec"/>
    <property type="match status" value="1"/>
</dbReference>
<dbReference type="FunFam" id="3.20.20.150:FF:000001">
    <property type="entry name" value="Probable endonuclease 4"/>
    <property type="match status" value="1"/>
</dbReference>
<dbReference type="Gene3D" id="3.20.20.150">
    <property type="entry name" value="Divalent-metal-dependent TIM barrel enzymes"/>
    <property type="match status" value="1"/>
</dbReference>
<dbReference type="HAMAP" id="MF_00152">
    <property type="entry name" value="Nfo"/>
    <property type="match status" value="1"/>
</dbReference>
<dbReference type="InterPro" id="IPR001719">
    <property type="entry name" value="AP_endonuc_2"/>
</dbReference>
<dbReference type="InterPro" id="IPR018246">
    <property type="entry name" value="AP_endonuc_F2_Zn_BS"/>
</dbReference>
<dbReference type="InterPro" id="IPR036237">
    <property type="entry name" value="Xyl_isomerase-like_sf"/>
</dbReference>
<dbReference type="InterPro" id="IPR013022">
    <property type="entry name" value="Xyl_isomerase-like_TIM-brl"/>
</dbReference>
<dbReference type="NCBIfam" id="TIGR00587">
    <property type="entry name" value="nfo"/>
    <property type="match status" value="1"/>
</dbReference>
<dbReference type="NCBIfam" id="NF002199">
    <property type="entry name" value="PRK01060.1-4"/>
    <property type="match status" value="1"/>
</dbReference>
<dbReference type="PANTHER" id="PTHR21445:SF0">
    <property type="entry name" value="APURINIC-APYRIMIDINIC ENDONUCLEASE"/>
    <property type="match status" value="1"/>
</dbReference>
<dbReference type="PANTHER" id="PTHR21445">
    <property type="entry name" value="ENDONUCLEASE IV ENDODEOXYRIBONUCLEASE IV"/>
    <property type="match status" value="1"/>
</dbReference>
<dbReference type="Pfam" id="PF01261">
    <property type="entry name" value="AP_endonuc_2"/>
    <property type="match status" value="1"/>
</dbReference>
<dbReference type="SMART" id="SM00518">
    <property type="entry name" value="AP2Ec"/>
    <property type="match status" value="1"/>
</dbReference>
<dbReference type="SUPFAM" id="SSF51658">
    <property type="entry name" value="Xylose isomerase-like"/>
    <property type="match status" value="1"/>
</dbReference>
<dbReference type="PROSITE" id="PS00729">
    <property type="entry name" value="AP_NUCLEASE_F2_1"/>
    <property type="match status" value="1"/>
</dbReference>
<dbReference type="PROSITE" id="PS00730">
    <property type="entry name" value="AP_NUCLEASE_F2_2"/>
    <property type="match status" value="1"/>
</dbReference>
<dbReference type="PROSITE" id="PS00731">
    <property type="entry name" value="AP_NUCLEASE_F2_3"/>
    <property type="match status" value="1"/>
</dbReference>
<dbReference type="PROSITE" id="PS51432">
    <property type="entry name" value="AP_NUCLEASE_F2_4"/>
    <property type="match status" value="1"/>
</dbReference>
<organism>
    <name type="scientific">Chlorobium luteolum (strain DSM 273 / BCRC 81028 / 2530)</name>
    <name type="common">Pelodictyon luteolum</name>
    <dbReference type="NCBI Taxonomy" id="319225"/>
    <lineage>
        <taxon>Bacteria</taxon>
        <taxon>Pseudomonadati</taxon>
        <taxon>Chlorobiota</taxon>
        <taxon>Chlorobiia</taxon>
        <taxon>Chlorobiales</taxon>
        <taxon>Chlorobiaceae</taxon>
        <taxon>Chlorobium/Pelodictyon group</taxon>
        <taxon>Pelodictyon</taxon>
    </lineage>
</organism>
<feature type="chain" id="PRO_1000011329" description="Probable endonuclease 4">
    <location>
        <begin position="1"/>
        <end position="279"/>
    </location>
</feature>
<feature type="binding site" evidence="1">
    <location>
        <position position="69"/>
    </location>
    <ligand>
        <name>Zn(2+)</name>
        <dbReference type="ChEBI" id="CHEBI:29105"/>
        <label>1</label>
    </ligand>
</feature>
<feature type="binding site" evidence="1">
    <location>
        <position position="109"/>
    </location>
    <ligand>
        <name>Zn(2+)</name>
        <dbReference type="ChEBI" id="CHEBI:29105"/>
        <label>1</label>
    </ligand>
</feature>
<feature type="binding site" evidence="1">
    <location>
        <position position="145"/>
    </location>
    <ligand>
        <name>Zn(2+)</name>
        <dbReference type="ChEBI" id="CHEBI:29105"/>
        <label>1</label>
    </ligand>
</feature>
<feature type="binding site" evidence="1">
    <location>
        <position position="145"/>
    </location>
    <ligand>
        <name>Zn(2+)</name>
        <dbReference type="ChEBI" id="CHEBI:29105"/>
        <label>2</label>
    </ligand>
</feature>
<feature type="binding site" evidence="1">
    <location>
        <position position="179"/>
    </location>
    <ligand>
        <name>Zn(2+)</name>
        <dbReference type="ChEBI" id="CHEBI:29105"/>
        <label>2</label>
    </ligand>
</feature>
<feature type="binding site" evidence="1">
    <location>
        <position position="182"/>
    </location>
    <ligand>
        <name>Zn(2+)</name>
        <dbReference type="ChEBI" id="CHEBI:29105"/>
        <label>3</label>
    </ligand>
</feature>
<feature type="binding site" evidence="1">
    <location>
        <position position="216"/>
    </location>
    <ligand>
        <name>Zn(2+)</name>
        <dbReference type="ChEBI" id="CHEBI:29105"/>
        <label>2</label>
    </ligand>
</feature>
<feature type="binding site" evidence="1">
    <location>
        <position position="229"/>
    </location>
    <ligand>
        <name>Zn(2+)</name>
        <dbReference type="ChEBI" id="CHEBI:29105"/>
        <label>3</label>
    </ligand>
</feature>
<feature type="binding site" evidence="1">
    <location>
        <position position="231"/>
    </location>
    <ligand>
        <name>Zn(2+)</name>
        <dbReference type="ChEBI" id="CHEBI:29105"/>
        <label>3</label>
    </ligand>
</feature>
<feature type="binding site" evidence="1">
    <location>
        <position position="261"/>
    </location>
    <ligand>
        <name>Zn(2+)</name>
        <dbReference type="ChEBI" id="CHEBI:29105"/>
        <label>2</label>
    </ligand>
</feature>